<organism>
    <name type="scientific">Petroselinum crispum</name>
    <name type="common">Parsley</name>
    <name type="synonym">Petroselinum hortense</name>
    <dbReference type="NCBI Taxonomy" id="4043"/>
    <lineage>
        <taxon>Eukaryota</taxon>
        <taxon>Viridiplantae</taxon>
        <taxon>Streptophyta</taxon>
        <taxon>Embryophyta</taxon>
        <taxon>Tracheophyta</taxon>
        <taxon>Spermatophyta</taxon>
        <taxon>Magnoliopsida</taxon>
        <taxon>eudicotyledons</taxon>
        <taxon>Gunneridae</taxon>
        <taxon>Pentapetalae</taxon>
        <taxon>asterids</taxon>
        <taxon>campanulids</taxon>
        <taxon>Apiales</taxon>
        <taxon>Apiaceae</taxon>
        <taxon>Apioideae</taxon>
        <taxon>apioid superclade</taxon>
        <taxon>Apieae</taxon>
        <taxon>Petroselinum</taxon>
    </lineage>
</organism>
<protein>
    <recommendedName>
        <fullName>Plastocyanin A/B</fullName>
    </recommendedName>
</protein>
<evidence type="ECO:0000269" key="1">
    <source>
    </source>
</evidence>
<evidence type="ECO:0000269" key="2">
    <source ref="2"/>
</evidence>
<evidence type="ECO:0000305" key="3"/>
<evidence type="ECO:0007829" key="4">
    <source>
        <dbReference type="PDB" id="1PLA"/>
    </source>
</evidence>
<evidence type="ECO:0007829" key="5">
    <source>
        <dbReference type="PDB" id="1PLB"/>
    </source>
</evidence>
<sequence length="97" mass="10290">AEVKLGSDDGGLVFSPSSFTVAAGEKITFKNNAGFPHNIVFDEDEVPAGVNAEKISQPEYLNGAGETYEVTLTEKGTYKFYCEPHAGAGMKGEVTVN</sequence>
<feature type="chain" id="PRO_0000085570" description="Plastocyanin A/B">
    <location>
        <begin position="1"/>
        <end position="97"/>
    </location>
</feature>
<feature type="domain" description="Plastocyanin-like">
    <location>
        <begin position="1"/>
        <end position="97"/>
    </location>
</feature>
<feature type="binding site" evidence="1">
    <location>
        <position position="37"/>
    </location>
    <ligand>
        <name>Cu cation</name>
        <dbReference type="ChEBI" id="CHEBI:23378"/>
    </ligand>
</feature>
<feature type="binding site" evidence="1">
    <location>
        <position position="82"/>
    </location>
    <ligand>
        <name>Cu cation</name>
        <dbReference type="ChEBI" id="CHEBI:23378"/>
    </ligand>
</feature>
<feature type="binding site" evidence="1">
    <location>
        <position position="85"/>
    </location>
    <ligand>
        <name>Cu cation</name>
        <dbReference type="ChEBI" id="CHEBI:23378"/>
    </ligand>
</feature>
<feature type="binding site" evidence="1">
    <location>
        <position position="90"/>
    </location>
    <ligand>
        <name>Cu cation</name>
        <dbReference type="ChEBI" id="CHEBI:23378"/>
    </ligand>
</feature>
<feature type="sequence variant" description="In plastocyanin B.">
    <original>E</original>
    <variation>D</variation>
    <location>
        <position position="53"/>
    </location>
</feature>
<feature type="strand" evidence="4">
    <location>
        <begin position="2"/>
        <end position="6"/>
    </location>
</feature>
<feature type="strand" evidence="4">
    <location>
        <begin position="8"/>
        <end position="10"/>
    </location>
</feature>
<feature type="strand" evidence="4">
    <location>
        <begin position="14"/>
        <end position="21"/>
    </location>
</feature>
<feature type="strand" evidence="4">
    <location>
        <begin position="27"/>
        <end position="33"/>
    </location>
</feature>
<feature type="strand" evidence="4">
    <location>
        <begin position="36"/>
        <end position="41"/>
    </location>
</feature>
<feature type="strand" evidence="5">
    <location>
        <begin position="48"/>
        <end position="50"/>
    </location>
</feature>
<feature type="turn" evidence="4">
    <location>
        <begin position="53"/>
        <end position="55"/>
    </location>
</feature>
<feature type="strand" evidence="4">
    <location>
        <begin position="57"/>
        <end position="61"/>
    </location>
</feature>
<feature type="strand" evidence="4">
    <location>
        <begin position="67"/>
        <end position="70"/>
    </location>
</feature>
<feature type="strand" evidence="4">
    <location>
        <begin position="74"/>
        <end position="81"/>
    </location>
</feature>
<feature type="helix" evidence="4">
    <location>
        <begin position="85"/>
        <end position="87"/>
    </location>
</feature>
<feature type="strand" evidence="4">
    <location>
        <begin position="91"/>
        <end position="96"/>
    </location>
</feature>
<proteinExistence type="evidence at protein level"/>
<reference key="1">
    <citation type="journal article" date="1990" name="FEBS Lett.">
        <title>Microheterogeneity of parsley plastocyanin.</title>
        <authorList>
            <person name="Dimitrov M.I."/>
            <person name="Donchev A.A."/>
            <person name="Egorov C.A."/>
        </authorList>
    </citation>
    <scope>PROTEIN SEQUENCE</scope>
    <scope>SUBCELLULAR LOCATION</scope>
    <source>
        <strain>cv. Festival</strain>
        <tissue>Leaf</tissue>
    </source>
</reference>
<reference key="2">
    <citation type="journal article" date="1985" name="Chem. Soc. Rev.">
        <title>Structure and electron-transfer reactivity of the blue copper protein plastocyanin.</title>
        <authorList>
            <person name="Sykes A.G."/>
        </authorList>
    </citation>
    <scope>PROTEIN SEQUENCE</scope>
</reference>
<reference key="3">
    <citation type="journal article" date="1994" name="Biochemistry">
        <title>High-resolution solution structure of reduced parsley plastocyanin.</title>
        <authorList>
            <person name="Bagby S."/>
            <person name="Driscoll P.C."/>
            <person name="Harvey T.S."/>
            <person name="Hill H.A.O."/>
        </authorList>
    </citation>
    <scope>STRUCTURE BY NMR IN COMPLEX WITH COPPER</scope>
    <scope>FUNCTION</scope>
    <scope>COFACTOR</scope>
    <scope>SUBCELLULAR LOCATION</scope>
</reference>
<keyword id="KW-0002">3D-structure</keyword>
<keyword id="KW-0150">Chloroplast</keyword>
<keyword id="KW-0186">Copper</keyword>
<keyword id="KW-0903">Direct protein sequencing</keyword>
<keyword id="KW-0249">Electron transport</keyword>
<keyword id="KW-0472">Membrane</keyword>
<keyword id="KW-0479">Metal-binding</keyword>
<keyword id="KW-0934">Plastid</keyword>
<keyword id="KW-0793">Thylakoid</keyword>
<keyword id="KW-0813">Transport</keyword>
<gene>
    <name type="primary">PETE</name>
</gene>
<name>PLAS_PETCR</name>
<comment type="function">
    <text evidence="1">Participates in electron transfer between P700 and the cytochrome b6-f complex in photosystem I.</text>
</comment>
<comment type="cofactor">
    <cofactor evidence="1">
        <name>Cu(2+)</name>
        <dbReference type="ChEBI" id="CHEBI:29036"/>
    </cofactor>
</comment>
<comment type="subcellular location">
    <subcellularLocation>
        <location evidence="1 2">Plastid</location>
        <location evidence="1 2">Chloroplast thylakoid membrane</location>
        <topology evidence="1">Peripheral membrane protein</topology>
        <orientation evidence="1">Lumenal side</orientation>
    </subcellularLocation>
    <text>Loosely bound to the inner thylakoid membrane surface in chloroplasts (PubMed:8204598).</text>
</comment>
<comment type="miscellaneous">
    <text>The sequence shown is that of plastocyanin A. There is only 1 difference between the sequence of parsley plastocyanins A and B.</text>
</comment>
<comment type="similarity">
    <text evidence="3">Belongs to the plastocyanin family.</text>
</comment>
<accession>P17341</accession>
<dbReference type="PIR" id="JW0014">
    <property type="entry name" value="JW0014"/>
</dbReference>
<dbReference type="PDB" id="1PLA">
    <property type="method" value="NMR"/>
    <property type="chains" value="A=1-97"/>
</dbReference>
<dbReference type="PDB" id="1PLB">
    <property type="method" value="NMR"/>
    <property type="chains" value="A=1-97"/>
</dbReference>
<dbReference type="PDBsum" id="1PLA"/>
<dbReference type="PDBsum" id="1PLB"/>
<dbReference type="SMR" id="P17341"/>
<dbReference type="EvolutionaryTrace" id="P17341"/>
<dbReference type="GO" id="GO:0009543">
    <property type="term" value="C:chloroplast thylakoid lumen"/>
    <property type="evidence" value="ECO:0007669"/>
    <property type="project" value="TreeGrafter"/>
</dbReference>
<dbReference type="GO" id="GO:0009535">
    <property type="term" value="C:chloroplast thylakoid membrane"/>
    <property type="evidence" value="ECO:0007669"/>
    <property type="project" value="UniProtKB-SubCell"/>
</dbReference>
<dbReference type="GO" id="GO:0005507">
    <property type="term" value="F:copper ion binding"/>
    <property type="evidence" value="ECO:0007669"/>
    <property type="project" value="InterPro"/>
</dbReference>
<dbReference type="GO" id="GO:0046028">
    <property type="term" value="F:electron transporter, transferring electrons from cytochrome b6/f complex of photosystem II activity"/>
    <property type="evidence" value="ECO:0007669"/>
    <property type="project" value="TreeGrafter"/>
</dbReference>
<dbReference type="CDD" id="cd04219">
    <property type="entry name" value="Plastocyanin"/>
    <property type="match status" value="1"/>
</dbReference>
<dbReference type="Gene3D" id="2.60.40.420">
    <property type="entry name" value="Cupredoxins - blue copper proteins"/>
    <property type="match status" value="1"/>
</dbReference>
<dbReference type="InterPro" id="IPR000923">
    <property type="entry name" value="BlueCu_1"/>
</dbReference>
<dbReference type="InterPro" id="IPR028871">
    <property type="entry name" value="BlueCu_1_BS"/>
</dbReference>
<dbReference type="InterPro" id="IPR001235">
    <property type="entry name" value="Copper_blue_Plastocyanin"/>
</dbReference>
<dbReference type="InterPro" id="IPR008972">
    <property type="entry name" value="Cupredoxin"/>
</dbReference>
<dbReference type="InterPro" id="IPR002387">
    <property type="entry name" value="Plastocyanin"/>
</dbReference>
<dbReference type="NCBIfam" id="TIGR02656">
    <property type="entry name" value="cyanin_plasto"/>
    <property type="match status" value="1"/>
</dbReference>
<dbReference type="PANTHER" id="PTHR34192">
    <property type="entry name" value="PLASTOCYANIN MAJOR ISOFORM, CHLOROPLASTIC-RELATED"/>
    <property type="match status" value="1"/>
</dbReference>
<dbReference type="PANTHER" id="PTHR34192:SF10">
    <property type="entry name" value="PLASTOCYANIN MAJOR ISOFORM, CHLOROPLASTIC-RELATED"/>
    <property type="match status" value="1"/>
</dbReference>
<dbReference type="Pfam" id="PF00127">
    <property type="entry name" value="Copper-bind"/>
    <property type="match status" value="1"/>
</dbReference>
<dbReference type="PRINTS" id="PR00156">
    <property type="entry name" value="COPPERBLUE"/>
</dbReference>
<dbReference type="PRINTS" id="PR00157">
    <property type="entry name" value="PLASTOCYANIN"/>
</dbReference>
<dbReference type="SUPFAM" id="SSF49503">
    <property type="entry name" value="Cupredoxins"/>
    <property type="match status" value="1"/>
</dbReference>
<dbReference type="PROSITE" id="PS00196">
    <property type="entry name" value="COPPER_BLUE"/>
    <property type="match status" value="1"/>
</dbReference>